<dbReference type="EC" id="3.1.1.34" evidence="2"/>
<dbReference type="EC" id="3.1.1.32" evidence="1"/>
<dbReference type="EMBL" id="X68308">
    <property type="protein sequence ID" value="CAA48384.1"/>
    <property type="molecule type" value="mRNA"/>
</dbReference>
<dbReference type="PIR" id="S29846">
    <property type="entry name" value="S29846"/>
</dbReference>
<dbReference type="RefSeq" id="NP_001009394.1">
    <property type="nucleotide sequence ID" value="NM_001009394.1"/>
</dbReference>
<dbReference type="SMR" id="Q29524"/>
<dbReference type="STRING" id="9940.ENSOARP00000011504"/>
<dbReference type="ESTHER" id="sheep-lipli">
    <property type="family name" value="Lipoprotein_Lipase"/>
</dbReference>
<dbReference type="GlyCosmos" id="Q29524">
    <property type="glycosylation" value="2 sites, No reported glycans"/>
</dbReference>
<dbReference type="PaxDb" id="9940-ENSOARP00000011504"/>
<dbReference type="Ensembl" id="ENSOART00020000747">
    <property type="protein sequence ID" value="ENSOARP00020000591"/>
    <property type="gene ID" value="ENSOARG00020000574"/>
</dbReference>
<dbReference type="Ensembl" id="ENSOART00180007157">
    <property type="protein sequence ID" value="ENSOARP00180003526"/>
    <property type="gene ID" value="ENSOARG00180004457"/>
</dbReference>
<dbReference type="Ensembl" id="ENSOART00215038919">
    <property type="protein sequence ID" value="ENSOARP00215019782"/>
    <property type="gene ID" value="ENSOARG00215023531"/>
</dbReference>
<dbReference type="Ensembl" id="ENSOART00220007968">
    <property type="protein sequence ID" value="ENSOARP00220005199"/>
    <property type="gene ID" value="ENSOARG00220004501"/>
</dbReference>
<dbReference type="Ensembl" id="ENSOART00225082933">
    <property type="protein sequence ID" value="ENSOARP00225043098"/>
    <property type="gene ID" value="ENSOARG00225049913"/>
</dbReference>
<dbReference type="Ensembl" id="ENSOART00260048384">
    <property type="protein sequence ID" value="ENSOARP00260024337"/>
    <property type="gene ID" value="ENSOARG00260029542"/>
</dbReference>
<dbReference type="GeneID" id="443408"/>
<dbReference type="KEGG" id="oas:443408"/>
<dbReference type="CTD" id="4023"/>
<dbReference type="eggNOG" id="ENOG502QQ7P">
    <property type="taxonomic scope" value="Eukaryota"/>
</dbReference>
<dbReference type="HOGENOM" id="CLU_027171_1_0_1"/>
<dbReference type="OMA" id="AIFVKCS"/>
<dbReference type="OrthoDB" id="199913at2759"/>
<dbReference type="Proteomes" id="UP000002356">
    <property type="component" value="Chromosome 2"/>
</dbReference>
<dbReference type="Bgee" id="ENSOARG00000010719">
    <property type="expression patterns" value="Expressed in heart right ventricle and 55 other cell types or tissues"/>
</dbReference>
<dbReference type="GO" id="GO:1902494">
    <property type="term" value="C:catalytic complex"/>
    <property type="evidence" value="ECO:0007669"/>
    <property type="project" value="Ensembl"/>
</dbReference>
<dbReference type="GO" id="GO:0009986">
    <property type="term" value="C:cell surface"/>
    <property type="evidence" value="ECO:0007669"/>
    <property type="project" value="Ensembl"/>
</dbReference>
<dbReference type="GO" id="GO:0042627">
    <property type="term" value="C:chylomicron"/>
    <property type="evidence" value="ECO:0007669"/>
    <property type="project" value="UniProtKB-KW"/>
</dbReference>
<dbReference type="GO" id="GO:0005615">
    <property type="term" value="C:extracellular space"/>
    <property type="evidence" value="ECO:0000250"/>
    <property type="project" value="UniProtKB"/>
</dbReference>
<dbReference type="GO" id="GO:0005886">
    <property type="term" value="C:plasma membrane"/>
    <property type="evidence" value="ECO:0007669"/>
    <property type="project" value="UniProtKB-SubCell"/>
</dbReference>
<dbReference type="GO" id="GO:0034361">
    <property type="term" value="C:very-low-density lipoprotein particle"/>
    <property type="evidence" value="ECO:0007669"/>
    <property type="project" value="UniProtKB-KW"/>
</dbReference>
<dbReference type="GO" id="GO:0034185">
    <property type="term" value="F:apolipoprotein binding"/>
    <property type="evidence" value="ECO:0007669"/>
    <property type="project" value="Ensembl"/>
</dbReference>
<dbReference type="GO" id="GO:0005509">
    <property type="term" value="F:calcium ion binding"/>
    <property type="evidence" value="ECO:0007669"/>
    <property type="project" value="Ensembl"/>
</dbReference>
<dbReference type="GO" id="GO:0043395">
    <property type="term" value="F:heparan sulfate proteoglycan binding"/>
    <property type="evidence" value="ECO:0000250"/>
    <property type="project" value="UniProtKB"/>
</dbReference>
<dbReference type="GO" id="GO:0008201">
    <property type="term" value="F:heparin binding"/>
    <property type="evidence" value="ECO:0000250"/>
    <property type="project" value="UniProtKB"/>
</dbReference>
<dbReference type="GO" id="GO:0004465">
    <property type="term" value="F:lipoprotein lipase activity"/>
    <property type="evidence" value="ECO:0000250"/>
    <property type="project" value="UniProtKB"/>
</dbReference>
<dbReference type="GO" id="GO:0071813">
    <property type="term" value="F:lipoprotein particle binding"/>
    <property type="evidence" value="ECO:0000250"/>
    <property type="project" value="UniProtKB"/>
</dbReference>
<dbReference type="GO" id="GO:0008970">
    <property type="term" value="F:phospholipase A1 activity"/>
    <property type="evidence" value="ECO:0000250"/>
    <property type="project" value="UniProtKB"/>
</dbReference>
<dbReference type="GO" id="GO:0042803">
    <property type="term" value="F:protein homodimerization activity"/>
    <property type="evidence" value="ECO:0007669"/>
    <property type="project" value="Ensembl"/>
</dbReference>
<dbReference type="GO" id="GO:0005102">
    <property type="term" value="F:signaling receptor binding"/>
    <property type="evidence" value="ECO:0007669"/>
    <property type="project" value="Ensembl"/>
</dbReference>
<dbReference type="GO" id="GO:0004806">
    <property type="term" value="F:triacylglycerol lipase activity"/>
    <property type="evidence" value="ECO:0000250"/>
    <property type="project" value="UniProtKB"/>
</dbReference>
<dbReference type="GO" id="GO:0071398">
    <property type="term" value="P:cellular response to fatty acid"/>
    <property type="evidence" value="ECO:0007669"/>
    <property type="project" value="Ensembl"/>
</dbReference>
<dbReference type="GO" id="GO:0031670">
    <property type="term" value="P:cellular response to nutrient"/>
    <property type="evidence" value="ECO:0007669"/>
    <property type="project" value="Ensembl"/>
</dbReference>
<dbReference type="GO" id="GO:0042632">
    <property type="term" value="P:cholesterol homeostasis"/>
    <property type="evidence" value="ECO:0007669"/>
    <property type="project" value="Ensembl"/>
</dbReference>
<dbReference type="GO" id="GO:0034371">
    <property type="term" value="P:chylomicron remodeling"/>
    <property type="evidence" value="ECO:0000250"/>
    <property type="project" value="UniProtKB"/>
</dbReference>
<dbReference type="GO" id="GO:0006633">
    <property type="term" value="P:fatty acid biosynthetic process"/>
    <property type="evidence" value="ECO:0007669"/>
    <property type="project" value="Ensembl"/>
</dbReference>
<dbReference type="GO" id="GO:0006631">
    <property type="term" value="P:fatty acid metabolic process"/>
    <property type="evidence" value="ECO:0000250"/>
    <property type="project" value="UniProtKB"/>
</dbReference>
<dbReference type="GO" id="GO:0055096">
    <property type="term" value="P:low-density lipoprotein particle mediated signaling"/>
    <property type="evidence" value="ECO:0007669"/>
    <property type="project" value="Ensembl"/>
</dbReference>
<dbReference type="GO" id="GO:1904179">
    <property type="term" value="P:positive regulation of adipose tissue development"/>
    <property type="evidence" value="ECO:0007669"/>
    <property type="project" value="Ensembl"/>
</dbReference>
<dbReference type="GO" id="GO:2000343">
    <property type="term" value="P:positive regulation of chemokine (C-X-C motif) ligand 2 production"/>
    <property type="evidence" value="ECO:0007669"/>
    <property type="project" value="Ensembl"/>
</dbReference>
<dbReference type="GO" id="GO:0010886">
    <property type="term" value="P:positive regulation of cholesterol storage"/>
    <property type="evidence" value="ECO:0007669"/>
    <property type="project" value="Ensembl"/>
</dbReference>
<dbReference type="GO" id="GO:0045600">
    <property type="term" value="P:positive regulation of fat cell differentiation"/>
    <property type="evidence" value="ECO:0007669"/>
    <property type="project" value="Ensembl"/>
</dbReference>
<dbReference type="GO" id="GO:0050729">
    <property type="term" value="P:positive regulation of inflammatory response"/>
    <property type="evidence" value="ECO:0007669"/>
    <property type="project" value="Ensembl"/>
</dbReference>
<dbReference type="GO" id="GO:0032731">
    <property type="term" value="P:positive regulation of interleukin-1 beta production"/>
    <property type="evidence" value="ECO:0007669"/>
    <property type="project" value="Ensembl"/>
</dbReference>
<dbReference type="GO" id="GO:0032755">
    <property type="term" value="P:positive regulation of interleukin-6 production"/>
    <property type="evidence" value="ECO:0007669"/>
    <property type="project" value="Ensembl"/>
</dbReference>
<dbReference type="GO" id="GO:0010744">
    <property type="term" value="P:positive regulation of macrophage derived foam cell differentiation"/>
    <property type="evidence" value="ECO:0007669"/>
    <property type="project" value="Ensembl"/>
</dbReference>
<dbReference type="GO" id="GO:0032760">
    <property type="term" value="P:positive regulation of tumor necrosis factor production"/>
    <property type="evidence" value="ECO:0007669"/>
    <property type="project" value="Ensembl"/>
</dbReference>
<dbReference type="GO" id="GO:0009617">
    <property type="term" value="P:response to bacterium"/>
    <property type="evidence" value="ECO:0007669"/>
    <property type="project" value="Ensembl"/>
</dbReference>
<dbReference type="GO" id="GO:0009749">
    <property type="term" value="P:response to glucose"/>
    <property type="evidence" value="ECO:0000250"/>
    <property type="project" value="AgBase"/>
</dbReference>
<dbReference type="GO" id="GO:0001523">
    <property type="term" value="P:retinoid metabolic process"/>
    <property type="evidence" value="ECO:0007669"/>
    <property type="project" value="Ensembl"/>
</dbReference>
<dbReference type="GO" id="GO:0019433">
    <property type="term" value="P:triglyceride catabolic process"/>
    <property type="evidence" value="ECO:0000250"/>
    <property type="project" value="UniProtKB"/>
</dbReference>
<dbReference type="GO" id="GO:0070328">
    <property type="term" value="P:triglyceride homeostasis"/>
    <property type="evidence" value="ECO:0007669"/>
    <property type="project" value="Ensembl"/>
</dbReference>
<dbReference type="GO" id="GO:0034447">
    <property type="term" value="P:very-low-density lipoprotein particle clearance"/>
    <property type="evidence" value="ECO:0007669"/>
    <property type="project" value="Ensembl"/>
</dbReference>
<dbReference type="GO" id="GO:0034372">
    <property type="term" value="P:very-low-density lipoprotein particle remodeling"/>
    <property type="evidence" value="ECO:0007669"/>
    <property type="project" value="Ensembl"/>
</dbReference>
<dbReference type="CDD" id="cd00707">
    <property type="entry name" value="Pancreat_lipase_like"/>
    <property type="match status" value="1"/>
</dbReference>
<dbReference type="CDD" id="cd01758">
    <property type="entry name" value="PLAT_LPL"/>
    <property type="match status" value="1"/>
</dbReference>
<dbReference type="FunFam" id="2.60.60.20:FF:000006">
    <property type="entry name" value="Lipoprotein lipase"/>
    <property type="match status" value="1"/>
</dbReference>
<dbReference type="FunFam" id="3.40.50.1820:FF:000031">
    <property type="entry name" value="Lipoprotein lipase"/>
    <property type="match status" value="1"/>
</dbReference>
<dbReference type="Gene3D" id="3.40.50.1820">
    <property type="entry name" value="alpha/beta hydrolase"/>
    <property type="match status" value="1"/>
</dbReference>
<dbReference type="Gene3D" id="2.60.60.20">
    <property type="entry name" value="PLAT/LH2 domain"/>
    <property type="match status" value="1"/>
</dbReference>
<dbReference type="InterPro" id="IPR029058">
    <property type="entry name" value="AB_hydrolase_fold"/>
</dbReference>
<dbReference type="InterPro" id="IPR013818">
    <property type="entry name" value="Lipase"/>
</dbReference>
<dbReference type="InterPro" id="IPR016272">
    <property type="entry name" value="Lipase_LIPH"/>
</dbReference>
<dbReference type="InterPro" id="IPR033906">
    <property type="entry name" value="Lipase_N"/>
</dbReference>
<dbReference type="InterPro" id="IPR002330">
    <property type="entry name" value="Lipo_Lipase"/>
</dbReference>
<dbReference type="InterPro" id="IPR001024">
    <property type="entry name" value="PLAT/LH2_dom"/>
</dbReference>
<dbReference type="InterPro" id="IPR036392">
    <property type="entry name" value="PLAT/LH2_dom_sf"/>
</dbReference>
<dbReference type="InterPro" id="IPR000734">
    <property type="entry name" value="TAG_lipase"/>
</dbReference>
<dbReference type="NCBIfam" id="TIGR03230">
    <property type="entry name" value="lipo_lipase"/>
    <property type="match status" value="1"/>
</dbReference>
<dbReference type="PANTHER" id="PTHR11610">
    <property type="entry name" value="LIPASE"/>
    <property type="match status" value="1"/>
</dbReference>
<dbReference type="PANTHER" id="PTHR11610:SF3">
    <property type="entry name" value="LIPOPROTEIN LIPASE"/>
    <property type="match status" value="1"/>
</dbReference>
<dbReference type="Pfam" id="PF00151">
    <property type="entry name" value="Lipase"/>
    <property type="match status" value="1"/>
</dbReference>
<dbReference type="Pfam" id="PF01477">
    <property type="entry name" value="PLAT"/>
    <property type="match status" value="1"/>
</dbReference>
<dbReference type="PIRSF" id="PIRSF000865">
    <property type="entry name" value="Lipoprotein_lipase_LIPH"/>
    <property type="match status" value="1"/>
</dbReference>
<dbReference type="PRINTS" id="PR00822">
    <property type="entry name" value="LIPOLIPASE"/>
</dbReference>
<dbReference type="PRINTS" id="PR00821">
    <property type="entry name" value="TAGLIPASE"/>
</dbReference>
<dbReference type="SMART" id="SM00308">
    <property type="entry name" value="LH2"/>
    <property type="match status" value="1"/>
</dbReference>
<dbReference type="SUPFAM" id="SSF53474">
    <property type="entry name" value="alpha/beta-Hydrolases"/>
    <property type="match status" value="1"/>
</dbReference>
<dbReference type="SUPFAM" id="SSF49723">
    <property type="entry name" value="Lipase/lipooxygenase domain (PLAT/LH2 domain)"/>
    <property type="match status" value="1"/>
</dbReference>
<dbReference type="PROSITE" id="PS00120">
    <property type="entry name" value="LIPASE_SER"/>
    <property type="match status" value="1"/>
</dbReference>
<dbReference type="PROSITE" id="PS50095">
    <property type="entry name" value="PLAT"/>
    <property type="match status" value="1"/>
</dbReference>
<feature type="signal peptide" evidence="4">
    <location>
        <begin position="1"/>
        <end position="27"/>
    </location>
</feature>
<feature type="chain" id="PRO_0000017781" description="Lipoprotein lipase">
    <location>
        <begin position="28"/>
        <end position="478"/>
    </location>
</feature>
<feature type="domain" description="PLAT" evidence="5">
    <location>
        <begin position="344"/>
        <end position="467"/>
    </location>
</feature>
<feature type="region of interest" description="Interaction with GPIHBP1" evidence="1">
    <location>
        <begin position="35"/>
        <end position="56"/>
    </location>
</feature>
<feature type="region of interest" description="Essential for determining substrate specificity" evidence="1">
    <location>
        <begin position="246"/>
        <end position="269"/>
    </location>
</feature>
<feature type="region of interest" description="Important for interaction with lipoprotein particles" evidence="1">
    <location>
        <begin position="420"/>
        <end position="424"/>
    </location>
</feature>
<feature type="region of interest" description="Important for heparin binding" evidence="1">
    <location>
        <begin position="433"/>
        <end position="437"/>
    </location>
</feature>
<feature type="region of interest" description="Interaction with GPIHBP1" evidence="1">
    <location>
        <begin position="446"/>
        <end position="470"/>
    </location>
</feature>
<feature type="active site" description="Nucleophile">
    <location>
        <position position="162"/>
    </location>
</feature>
<feature type="active site" description="Charge relay system">
    <location>
        <position position="186"/>
    </location>
</feature>
<feature type="active site" description="Charge relay system">
    <location>
        <position position="271"/>
    </location>
</feature>
<feature type="binding site" evidence="1">
    <location>
        <position position="197"/>
    </location>
    <ligand>
        <name>Ca(2+)</name>
        <dbReference type="ChEBI" id="CHEBI:29108"/>
    </ligand>
</feature>
<feature type="binding site" evidence="1">
    <location>
        <position position="200"/>
    </location>
    <ligand>
        <name>Ca(2+)</name>
        <dbReference type="ChEBI" id="CHEBI:29108"/>
    </ligand>
</feature>
<feature type="binding site" evidence="1">
    <location>
        <position position="202"/>
    </location>
    <ligand>
        <name>Ca(2+)</name>
        <dbReference type="ChEBI" id="CHEBI:29108"/>
    </ligand>
</feature>
<feature type="binding site" evidence="1">
    <location>
        <position position="205"/>
    </location>
    <ligand>
        <name>Ca(2+)</name>
        <dbReference type="ChEBI" id="CHEBI:29108"/>
    </ligand>
</feature>
<feature type="modified residue" description="3'-nitrotyrosine" evidence="3">
    <location>
        <position position="124"/>
    </location>
</feature>
<feature type="modified residue" description="3'-nitrotyrosine" evidence="3">
    <location>
        <position position="194"/>
    </location>
</feature>
<feature type="modified residue" description="3'-nitrotyrosine" evidence="3">
    <location>
        <position position="346"/>
    </location>
</feature>
<feature type="glycosylation site" description="N-linked (GlcNAc...) asparagine" evidence="4">
    <location>
        <position position="73"/>
    </location>
</feature>
<feature type="glycosylation site" description="N-linked (GlcNAc...) asparagine" evidence="4">
    <location>
        <position position="389"/>
    </location>
</feature>
<feature type="disulfide bond" evidence="5">
    <location>
        <begin position="57"/>
        <end position="70"/>
    </location>
</feature>
<feature type="disulfide bond" evidence="5">
    <location>
        <begin position="246"/>
        <end position="269"/>
    </location>
</feature>
<feature type="disulfide bond" evidence="5">
    <location>
        <begin position="294"/>
        <end position="313"/>
    </location>
</feature>
<feature type="disulfide bond" evidence="5">
    <location>
        <begin position="305"/>
        <end position="308"/>
    </location>
</feature>
<feature type="disulfide bond" evidence="5">
    <location>
        <begin position="448"/>
        <end position="468"/>
    </location>
</feature>
<comment type="function">
    <text evidence="1">Key enzyme in triglyceride metabolism (By similarity). Catalyzes the hydrolysis of triglycerides from circulating chylomicrons and very low density lipoproteins (VLDL), and thereby plays an important role in lipid clearance from the blood stream, lipid utilization and storage (By similarity). Although it has both phospholipase and triglyceride lipase activities it is primarily a triglyceride lipase with low but detectable phospholipase activity (By similarity). Mediates margination of triglyceride-rich lipoprotein particles in capillaries (By similarity). Recruited to its site of action on the luminal surface of vascular endothelium by binding to GPIHBP1 and cell surface heparan sulfate proteoglycans (By similarity).</text>
</comment>
<comment type="catalytic activity">
    <reaction evidence="2">
        <text>a triacylglycerol + H2O = a diacylglycerol + a fatty acid + H(+)</text>
        <dbReference type="Rhea" id="RHEA:12044"/>
        <dbReference type="ChEBI" id="CHEBI:15377"/>
        <dbReference type="ChEBI" id="CHEBI:15378"/>
        <dbReference type="ChEBI" id="CHEBI:17855"/>
        <dbReference type="ChEBI" id="CHEBI:18035"/>
        <dbReference type="ChEBI" id="CHEBI:28868"/>
        <dbReference type="EC" id="3.1.1.34"/>
    </reaction>
</comment>
<comment type="catalytic activity">
    <reaction evidence="1">
        <text>a 1,2-diacyl-sn-glycero-3-phosphocholine + H2O = a 2-acyl-sn-glycero-3-phosphocholine + a fatty acid + H(+)</text>
        <dbReference type="Rhea" id="RHEA:18689"/>
        <dbReference type="ChEBI" id="CHEBI:15377"/>
        <dbReference type="ChEBI" id="CHEBI:15378"/>
        <dbReference type="ChEBI" id="CHEBI:28868"/>
        <dbReference type="ChEBI" id="CHEBI:57643"/>
        <dbReference type="ChEBI" id="CHEBI:57875"/>
        <dbReference type="EC" id="3.1.1.32"/>
    </reaction>
</comment>
<comment type="catalytic activity">
    <reaction evidence="1">
        <text>1,2,3-tri-(9Z-octadecenoyl)-glycerol + H2O = di-(9Z)-octadecenoylglycerol + (9Z)-octadecenoate + H(+)</text>
        <dbReference type="Rhea" id="RHEA:38575"/>
        <dbReference type="ChEBI" id="CHEBI:15377"/>
        <dbReference type="ChEBI" id="CHEBI:15378"/>
        <dbReference type="ChEBI" id="CHEBI:30823"/>
        <dbReference type="ChEBI" id="CHEBI:53753"/>
        <dbReference type="ChEBI" id="CHEBI:75945"/>
    </reaction>
    <physiologicalReaction direction="left-to-right" evidence="1">
        <dbReference type="Rhea" id="RHEA:38576"/>
    </physiologicalReaction>
</comment>
<comment type="catalytic activity">
    <reaction evidence="1">
        <text>1,2-di-(9Z-octadecenoyl)-sn-glycero-3-phosphocholine + H2O = (9Z-octadecenoyl)-sn-glycero-3-phosphocholine + (9Z)-octadecenoate + H(+)</text>
        <dbReference type="Rhea" id="RHEA:38699"/>
        <dbReference type="ChEBI" id="CHEBI:15377"/>
        <dbReference type="ChEBI" id="CHEBI:15378"/>
        <dbReference type="ChEBI" id="CHEBI:30823"/>
        <dbReference type="ChEBI" id="CHEBI:74669"/>
        <dbReference type="ChEBI" id="CHEBI:76083"/>
    </reaction>
    <physiologicalReaction direction="left-to-right" evidence="1">
        <dbReference type="Rhea" id="RHEA:38700"/>
    </physiologicalReaction>
</comment>
<comment type="catalytic activity">
    <reaction evidence="1">
        <text>1,2,3-tributanoylglycerol + H2O = dibutanoylglycerol + butanoate + H(+)</text>
        <dbReference type="Rhea" id="RHEA:40475"/>
        <dbReference type="ChEBI" id="CHEBI:15377"/>
        <dbReference type="ChEBI" id="CHEBI:15378"/>
        <dbReference type="ChEBI" id="CHEBI:17968"/>
        <dbReference type="ChEBI" id="CHEBI:35020"/>
        <dbReference type="ChEBI" id="CHEBI:76478"/>
    </reaction>
    <physiologicalReaction direction="left-to-right" evidence="1">
        <dbReference type="Rhea" id="RHEA:40476"/>
    </physiologicalReaction>
</comment>
<comment type="catalytic activity">
    <reaction evidence="1">
        <text>1,2-dihexadecanoyl-sn-glycero-3-phosphocholine + H2O = hexadecanoyl-sn-glycero-3-phosphocholine + hexadecanoate + H(+)</text>
        <dbReference type="Rhea" id="RHEA:41384"/>
        <dbReference type="ChEBI" id="CHEBI:7896"/>
        <dbReference type="ChEBI" id="CHEBI:15377"/>
        <dbReference type="ChEBI" id="CHEBI:15378"/>
        <dbReference type="ChEBI" id="CHEBI:64563"/>
        <dbReference type="ChEBI" id="CHEBI:72999"/>
    </reaction>
    <physiologicalReaction direction="left-to-right" evidence="1">
        <dbReference type="Rhea" id="RHEA:41385"/>
    </physiologicalReaction>
</comment>
<comment type="activity regulation">
    <text evidence="1 2">The apolipoprotein APOC2 acts as a coactivator of LPL activity (By similarity). Ca(2+) binding promotes protein stability and formation of the active homodimer. Interaction with GPIHBP1 protects LPL against inactivation by ANGPTL4 (By similarity).</text>
</comment>
<comment type="subunit">
    <text evidence="1 2">Homodimer. Interacts with GPIHBP1 with 1:1 stoichiometry (By similarity). Interacts with APOC2; the interaction activates LPL activity in the presence of lipids (By similarity). Interaction with heparan sulfate proteoglycans is required to protect LPL against loss of activity. Associates with lipoprotein particles in blood plasma. Interacts with LMF1 and SEL1L; interaction with SEL1L is required to prevent aggregation of newly synthesized LPL in the endoplasmic reticulum (ER), and for normal export of LPL from the ER to the extracellular space (By similarity). Interacts with SORL1; SORL1 acts as a sorting receptor, promoting LPL localization to endosomes and later to lysosomes, leading to degradation of newly synthesized LPL (By similarity).</text>
</comment>
<comment type="subcellular location">
    <subcellularLocation>
        <location evidence="2">Cell membrane</location>
        <topology evidence="2">Peripheral membrane protein</topology>
        <orientation evidence="2">Extracellular side</orientation>
    </subcellularLocation>
    <subcellularLocation>
        <location evidence="2">Secreted</location>
    </subcellularLocation>
    <subcellularLocation>
        <location evidence="2">Secreted</location>
        <location evidence="2">Extracellular space</location>
        <location evidence="2">Extracellular matrix</location>
    </subcellularLocation>
    <text evidence="2">Newly synthesized LPL binds to cell surface heparan proteoglycans and is then released by heparanase. Subsequently, it becomes attached to heparan proteoglycan on endothelial cells. Locates to the plasma membrane of microvilli of hepatocytes with triglyceride-rich lipoproteins (TRL). Some of the bound LPL is then internalized and located inside non-coated endocytic vesicles.</text>
</comment>
<comment type="PTM">
    <text evidence="3">Tyrosine nitration after lipopolysaccharide (LPS) challenge down-regulates the lipase activity.</text>
</comment>
<comment type="similarity">
    <text evidence="6">Belongs to the AB hydrolase superfamily. Lipase family.</text>
</comment>
<reference key="1">
    <citation type="journal article" date="1993" name="Biochim. Biophys. Acta">
        <title>Cloning and sequencing of a full length cDNA encoding ovine lipoprotein lipase.</title>
        <authorList>
            <person name="Edwards W.D."/>
            <person name="Daniels S.W."/>
            <person name="Page R.A."/>
            <person name="Volpe C.P."/>
            <person name="Kille P."/>
            <person name="Sweeney G.E."/>
            <person name="Cryer A."/>
        </authorList>
    </citation>
    <scope>NUCLEOTIDE SEQUENCE [MRNA]</scope>
    <source>
        <strain>Welsh Mountain/Dorset</strain>
        <tissue>Adipose tissue</tissue>
    </source>
</reference>
<evidence type="ECO:0000250" key="1">
    <source>
        <dbReference type="UniProtKB" id="P06858"/>
    </source>
</evidence>
<evidence type="ECO:0000250" key="2">
    <source>
        <dbReference type="UniProtKB" id="P11151"/>
    </source>
</evidence>
<evidence type="ECO:0000250" key="3">
    <source>
        <dbReference type="UniProtKB" id="Q06000"/>
    </source>
</evidence>
<evidence type="ECO:0000255" key="4"/>
<evidence type="ECO:0000255" key="5">
    <source>
        <dbReference type="PROSITE-ProRule" id="PRU00152"/>
    </source>
</evidence>
<evidence type="ECO:0000305" key="6"/>
<protein>
    <recommendedName>
        <fullName>Lipoprotein lipase</fullName>
        <shortName>LPL</shortName>
        <ecNumber evidence="2">3.1.1.34</ecNumber>
    </recommendedName>
    <alternativeName>
        <fullName>Phospholipase A1</fullName>
        <ecNumber evidence="1">3.1.1.32</ecNumber>
    </alternativeName>
</protein>
<proteinExistence type="evidence at transcript level"/>
<keyword id="KW-0106">Calcium</keyword>
<keyword id="KW-1003">Cell membrane</keyword>
<keyword id="KW-0162">Chylomicron</keyword>
<keyword id="KW-1015">Disulfide bond</keyword>
<keyword id="KW-0272">Extracellular matrix</keyword>
<keyword id="KW-0325">Glycoprotein</keyword>
<keyword id="KW-0358">Heparin-binding</keyword>
<keyword id="KW-0378">Hydrolase</keyword>
<keyword id="KW-0442">Lipid degradation</keyword>
<keyword id="KW-0443">Lipid metabolism</keyword>
<keyword id="KW-0472">Membrane</keyword>
<keyword id="KW-0479">Metal-binding</keyword>
<keyword id="KW-0944">Nitration</keyword>
<keyword id="KW-1185">Reference proteome</keyword>
<keyword id="KW-0964">Secreted</keyword>
<keyword id="KW-0732">Signal</keyword>
<keyword id="KW-0850">VLDL</keyword>
<organism>
    <name type="scientific">Ovis aries</name>
    <name type="common">Sheep</name>
    <dbReference type="NCBI Taxonomy" id="9940"/>
    <lineage>
        <taxon>Eukaryota</taxon>
        <taxon>Metazoa</taxon>
        <taxon>Chordata</taxon>
        <taxon>Craniata</taxon>
        <taxon>Vertebrata</taxon>
        <taxon>Euteleostomi</taxon>
        <taxon>Mammalia</taxon>
        <taxon>Eutheria</taxon>
        <taxon>Laurasiatheria</taxon>
        <taxon>Artiodactyla</taxon>
        <taxon>Ruminantia</taxon>
        <taxon>Pecora</taxon>
        <taxon>Bovidae</taxon>
        <taxon>Caprinae</taxon>
        <taxon>Ovis</taxon>
    </lineage>
</organism>
<sequence>MESKVLLLLALSVWLQSLTVSRGGLVAADRITRGKDFRDIESKFALRTPEDTAEDTCHLIPGVTESVANCHFNHSSKTFVVIHGWTVTGMYESWVPKLVAALYKREPDSNVIVVDWLSRAQQHYPVSAGYTKLVGQDVAKFMNWMADEFNYPLGNVHLLGYSLGAHAAGIAGSLTNKKVNRITGLDPAGPNFEYAEAPSRLSPDDADFVDVLHTFTRGSPGRSIGIQKPVGHVDIYPNGGTFQPGCNIGEALRVIAERGLGDVDQLVKCSHERSVHLFIDSLLNEENPSKAYRCNSKEAFEKGLCLSCRKNRCNNMGYEINKVRAKRSSKMYLKTRSQMPYKVFHYQVKIHFSGTESNTYTNQAFEISLYGTVAESENIPFTLPEVSTNKTYSFLLYTEVDIGELLMLKLKWISDSYFSWSNWWSSPGFDIGKIRVKAGETQKKVIFCSREKMSYLQKGKSPVIFVKCHDKSLNRKSG</sequence>
<gene>
    <name type="primary">LPL</name>
</gene>
<name>LIPL_SHEEP</name>
<accession>Q29524</accession>